<name>PAND_PSEFL</name>
<reference key="1">
    <citation type="submission" date="2003-01" db="EMBL/GenBank/DDBJ databases">
        <title>A modified IVET system for plant-associated fluorescent Pseudomonas spp.</title>
        <authorList>
            <person name="Mavrodi D.V."/>
            <person name="Weller D.M."/>
            <person name="Thomashow L.S."/>
        </authorList>
    </citation>
    <scope>NUCLEOTIDE SEQUENCE [GENOMIC DNA]</scope>
    <source>
        <strain>Q8r1-96</strain>
    </source>
</reference>
<comment type="function">
    <text evidence="1">Catalyzes the pyruvoyl-dependent decarboxylation of aspartate to produce beta-alanine.</text>
</comment>
<comment type="catalytic activity">
    <reaction evidence="1">
        <text>L-aspartate + H(+) = beta-alanine + CO2</text>
        <dbReference type="Rhea" id="RHEA:19497"/>
        <dbReference type="ChEBI" id="CHEBI:15378"/>
        <dbReference type="ChEBI" id="CHEBI:16526"/>
        <dbReference type="ChEBI" id="CHEBI:29991"/>
        <dbReference type="ChEBI" id="CHEBI:57966"/>
        <dbReference type="EC" id="4.1.1.11"/>
    </reaction>
</comment>
<comment type="cofactor">
    <cofactor evidence="1">
        <name>pyruvate</name>
        <dbReference type="ChEBI" id="CHEBI:15361"/>
    </cofactor>
    <text evidence="1">Binds 1 pyruvoyl group covalently per subunit.</text>
</comment>
<comment type="pathway">
    <text evidence="1">Cofactor biosynthesis; (R)-pantothenate biosynthesis; beta-alanine from L-aspartate: step 1/1.</text>
</comment>
<comment type="subunit">
    <text evidence="1">Heterooctamer of four alpha and four beta subunits.</text>
</comment>
<comment type="subcellular location">
    <subcellularLocation>
        <location evidence="1">Cytoplasm</location>
    </subcellularLocation>
</comment>
<comment type="PTM">
    <text evidence="1">Is synthesized initially as an inactive proenzyme, which is activated by self-cleavage at a specific serine bond to produce a beta-subunit with a hydroxyl group at its C-terminus and an alpha-subunit with a pyruvoyl group at its N-terminus.</text>
</comment>
<comment type="similarity">
    <text evidence="1">Belongs to the PanD family.</text>
</comment>
<keyword id="KW-0068">Autocatalytic cleavage</keyword>
<keyword id="KW-0963">Cytoplasm</keyword>
<keyword id="KW-0210">Decarboxylase</keyword>
<keyword id="KW-0456">Lyase</keyword>
<keyword id="KW-0566">Pantothenate biosynthesis</keyword>
<keyword id="KW-0670">Pyruvate</keyword>
<keyword id="KW-0704">Schiff base</keyword>
<keyword id="KW-0865">Zymogen</keyword>
<evidence type="ECO:0000255" key="1">
    <source>
        <dbReference type="HAMAP-Rule" id="MF_00446"/>
    </source>
</evidence>
<accession>Q848I5</accession>
<sequence length="126" mass="14013">MHAIMLKAKLHRAEVTHAVLDYEGSCAIDGEWLDLSGIREYEQIQIYNVDNGERFTTYAIRGEEGSRMISVNGAAAHKAKVGDRVIICAYAHYSEAELVNFKPRMLYMAPGNELSRASNAIPVQLA</sequence>
<proteinExistence type="inferred from homology"/>
<feature type="chain" id="PRO_0000023139" description="Aspartate 1-decarboxylase beta chain" evidence="1">
    <location>
        <begin position="1"/>
        <end position="24"/>
    </location>
</feature>
<feature type="chain" id="PRO_0000023140" description="Aspartate 1-decarboxylase alpha chain" evidence="1">
    <location>
        <begin position="25"/>
        <end position="126"/>
    </location>
</feature>
<feature type="active site" description="Schiff-base intermediate with substrate; via pyruvic acid" evidence="1">
    <location>
        <position position="25"/>
    </location>
</feature>
<feature type="active site" description="Proton donor" evidence="1">
    <location>
        <position position="58"/>
    </location>
</feature>
<feature type="binding site" evidence="1">
    <location>
        <position position="57"/>
    </location>
    <ligand>
        <name>substrate</name>
    </ligand>
</feature>
<feature type="binding site" evidence="1">
    <location>
        <begin position="73"/>
        <end position="75"/>
    </location>
    <ligand>
        <name>substrate</name>
    </ligand>
</feature>
<feature type="modified residue" description="Pyruvic acid (Ser)" evidence="1">
    <location>
        <position position="25"/>
    </location>
</feature>
<dbReference type="EC" id="4.1.1.11" evidence="1"/>
<dbReference type="EMBL" id="AY210414">
    <property type="protein sequence ID" value="AAO60162.1"/>
    <property type="molecule type" value="Genomic_DNA"/>
</dbReference>
<dbReference type="SMR" id="Q848I5"/>
<dbReference type="UniPathway" id="UPA00028">
    <property type="reaction ID" value="UER00002"/>
</dbReference>
<dbReference type="GO" id="GO:0005829">
    <property type="term" value="C:cytosol"/>
    <property type="evidence" value="ECO:0007669"/>
    <property type="project" value="TreeGrafter"/>
</dbReference>
<dbReference type="GO" id="GO:0004068">
    <property type="term" value="F:aspartate 1-decarboxylase activity"/>
    <property type="evidence" value="ECO:0007669"/>
    <property type="project" value="UniProtKB-UniRule"/>
</dbReference>
<dbReference type="GO" id="GO:0006523">
    <property type="term" value="P:alanine biosynthetic process"/>
    <property type="evidence" value="ECO:0007669"/>
    <property type="project" value="InterPro"/>
</dbReference>
<dbReference type="GO" id="GO:0015940">
    <property type="term" value="P:pantothenate biosynthetic process"/>
    <property type="evidence" value="ECO:0007669"/>
    <property type="project" value="UniProtKB-UniRule"/>
</dbReference>
<dbReference type="CDD" id="cd06919">
    <property type="entry name" value="Asp_decarbox"/>
    <property type="match status" value="1"/>
</dbReference>
<dbReference type="Gene3D" id="2.40.40.20">
    <property type="match status" value="1"/>
</dbReference>
<dbReference type="HAMAP" id="MF_00446">
    <property type="entry name" value="PanD"/>
    <property type="match status" value="1"/>
</dbReference>
<dbReference type="InterPro" id="IPR009010">
    <property type="entry name" value="Asp_de-COase-like_dom_sf"/>
</dbReference>
<dbReference type="InterPro" id="IPR003190">
    <property type="entry name" value="Asp_decarbox"/>
</dbReference>
<dbReference type="NCBIfam" id="TIGR00223">
    <property type="entry name" value="panD"/>
    <property type="match status" value="1"/>
</dbReference>
<dbReference type="PANTHER" id="PTHR21012">
    <property type="entry name" value="ASPARTATE 1-DECARBOXYLASE"/>
    <property type="match status" value="1"/>
</dbReference>
<dbReference type="PANTHER" id="PTHR21012:SF0">
    <property type="entry name" value="ASPARTATE 1-DECARBOXYLASE"/>
    <property type="match status" value="1"/>
</dbReference>
<dbReference type="Pfam" id="PF02261">
    <property type="entry name" value="Asp_decarbox"/>
    <property type="match status" value="1"/>
</dbReference>
<dbReference type="PIRSF" id="PIRSF006246">
    <property type="entry name" value="Asp_decarbox"/>
    <property type="match status" value="1"/>
</dbReference>
<dbReference type="SUPFAM" id="SSF50692">
    <property type="entry name" value="ADC-like"/>
    <property type="match status" value="1"/>
</dbReference>
<organism>
    <name type="scientific">Pseudomonas fluorescens</name>
    <dbReference type="NCBI Taxonomy" id="294"/>
    <lineage>
        <taxon>Bacteria</taxon>
        <taxon>Pseudomonadati</taxon>
        <taxon>Pseudomonadota</taxon>
        <taxon>Gammaproteobacteria</taxon>
        <taxon>Pseudomonadales</taxon>
        <taxon>Pseudomonadaceae</taxon>
        <taxon>Pseudomonas</taxon>
    </lineage>
</organism>
<protein>
    <recommendedName>
        <fullName evidence="1">Aspartate 1-decarboxylase</fullName>
        <ecNumber evidence="1">4.1.1.11</ecNumber>
    </recommendedName>
    <alternativeName>
        <fullName evidence="1">Aspartate alpha-decarboxylase</fullName>
    </alternativeName>
    <component>
        <recommendedName>
            <fullName evidence="1">Aspartate 1-decarboxylase beta chain</fullName>
        </recommendedName>
    </component>
    <component>
        <recommendedName>
            <fullName evidence="1">Aspartate 1-decarboxylase alpha chain</fullName>
        </recommendedName>
    </component>
</protein>
<gene>
    <name evidence="1" type="primary">panD</name>
</gene>